<proteinExistence type="inferred from homology"/>
<gene>
    <name evidence="1" type="primary">opgH</name>
    <name type="ordered locus">XCV0675</name>
</gene>
<reference key="1">
    <citation type="journal article" date="2005" name="J. Bacteriol.">
        <title>Insights into genome plasticity and pathogenicity of the plant pathogenic Bacterium Xanthomonas campestris pv. vesicatoria revealed by the complete genome sequence.</title>
        <authorList>
            <person name="Thieme F."/>
            <person name="Koebnik R."/>
            <person name="Bekel T."/>
            <person name="Berger C."/>
            <person name="Boch J."/>
            <person name="Buettner D."/>
            <person name="Caldana C."/>
            <person name="Gaigalat L."/>
            <person name="Goesmann A."/>
            <person name="Kay S."/>
            <person name="Kirchner O."/>
            <person name="Lanz C."/>
            <person name="Linke B."/>
            <person name="McHardy A.C."/>
            <person name="Meyer F."/>
            <person name="Mittenhuber G."/>
            <person name="Nies D.H."/>
            <person name="Niesbach-Kloesgen U."/>
            <person name="Patschkowski T."/>
            <person name="Rueckert C."/>
            <person name="Rupp O."/>
            <person name="Schneiker S."/>
            <person name="Schuster S.C."/>
            <person name="Vorhoelter F.J."/>
            <person name="Weber E."/>
            <person name="Puehler A."/>
            <person name="Bonas U."/>
            <person name="Bartels D."/>
            <person name="Kaiser O."/>
        </authorList>
    </citation>
    <scope>NUCLEOTIDE SEQUENCE [LARGE SCALE GENOMIC DNA]</scope>
    <source>
        <strain>85-10</strain>
    </source>
</reference>
<sequence>MDGTVTPSPTTTAMPPVSALDAGTPTLPPEAPLAMPEQNLREGSLQVRHQRTSPPGIGVRRFYLIGGTFATTAIAVWVMLSVLWPDGISVLEGCLLGLFVLLFAWIAMSFASAVAGFVTVVARAGRKLGIDPEQPLPTLRSRTALLMPTYNEDPRRLLAGLQAIYESVAETGQLEHFDFFVLSDTTREHIGRAEELVYNELCDRVDGHGRIFYRRRADNAARKAGNVADWVRRFGGSYPQMLILDADSVMTGDTIVRLVAGMENNPDVGLIQTLPAVVNGQTLFARMQQFGGRVYGPIIAFGVAWWHGAESNYWGHNAIIRTQAFADHAGLPSLRGRKPFGGHVLSHDFVEAALMRRGGWAMHMVPYLQGSYEEGPPTLTDLLIRDRRWCQGNLQHAKVVSAKGLHWISRMHMLIGIGHYFTAPMWGLLMLIGIGIPLAGGGIDLAGDLPFSPARYWHGSSQGNAIWIFICTMFVLLAPKLLGYIALLLNPRELRACGGAFRAAVSILLETVLAALMAPVVMYLQSRGVFEVLAGKDSGWDAQVRDDGKLSWPALFRSYGGLTVFGLFMGAVAYAVSPALAAWMGPVIVGMALSIPVVALTSLRRTGMALRRAGIFCIPEELDPPKVLVRASELRRAAALEPSLI</sequence>
<keyword id="KW-0997">Cell inner membrane</keyword>
<keyword id="KW-1003">Cell membrane</keyword>
<keyword id="KW-0328">Glycosyltransferase</keyword>
<keyword id="KW-0472">Membrane</keyword>
<keyword id="KW-0808">Transferase</keyword>
<keyword id="KW-0812">Transmembrane</keyword>
<keyword id="KW-1133">Transmembrane helix</keyword>
<feature type="chain" id="PRO_1000064619" description="Glucans biosynthesis glucosyltransferase H">
    <location>
        <begin position="1"/>
        <end position="645"/>
    </location>
</feature>
<feature type="transmembrane region" description="Helical" evidence="1">
    <location>
        <begin position="64"/>
        <end position="84"/>
    </location>
</feature>
<feature type="transmembrane region" description="Helical" evidence="1">
    <location>
        <begin position="98"/>
        <end position="118"/>
    </location>
</feature>
<feature type="transmembrane region" description="Helical" evidence="1">
    <location>
        <begin position="423"/>
        <end position="443"/>
    </location>
</feature>
<feature type="transmembrane region" description="Helical" evidence="1">
    <location>
        <begin position="465"/>
        <end position="485"/>
    </location>
</feature>
<feature type="transmembrane region" description="Helical" evidence="1">
    <location>
        <begin position="504"/>
        <end position="524"/>
    </location>
</feature>
<feature type="transmembrane region" description="Helical" evidence="1">
    <location>
        <begin position="559"/>
        <end position="579"/>
    </location>
</feature>
<feature type="transmembrane region" description="Helical" evidence="1">
    <location>
        <begin position="580"/>
        <end position="600"/>
    </location>
</feature>
<feature type="region of interest" description="Disordered" evidence="2">
    <location>
        <begin position="1"/>
        <end position="32"/>
    </location>
</feature>
<feature type="compositionally biased region" description="Polar residues" evidence="2">
    <location>
        <begin position="1"/>
        <end position="13"/>
    </location>
</feature>
<dbReference type="EC" id="2.4.1.-" evidence="1"/>
<dbReference type="EMBL" id="AM039952">
    <property type="protein sequence ID" value="CAJ22306.1"/>
    <property type="molecule type" value="Genomic_DNA"/>
</dbReference>
<dbReference type="STRING" id="456327.BJD11_19460"/>
<dbReference type="CAZy" id="GT2">
    <property type="family name" value="Glycosyltransferase Family 2"/>
</dbReference>
<dbReference type="KEGG" id="xcv:XCV0675"/>
<dbReference type="eggNOG" id="COG2943">
    <property type="taxonomic scope" value="Bacteria"/>
</dbReference>
<dbReference type="HOGENOM" id="CLU_015730_1_0_6"/>
<dbReference type="UniPathway" id="UPA00637"/>
<dbReference type="Proteomes" id="UP000007069">
    <property type="component" value="Chromosome"/>
</dbReference>
<dbReference type="GO" id="GO:0005886">
    <property type="term" value="C:plasma membrane"/>
    <property type="evidence" value="ECO:0007669"/>
    <property type="project" value="UniProtKB-SubCell"/>
</dbReference>
<dbReference type="GO" id="GO:0016758">
    <property type="term" value="F:hexosyltransferase activity"/>
    <property type="evidence" value="ECO:0007669"/>
    <property type="project" value="UniProtKB-UniRule"/>
</dbReference>
<dbReference type="GO" id="GO:0009250">
    <property type="term" value="P:glucan biosynthetic process"/>
    <property type="evidence" value="ECO:0007669"/>
    <property type="project" value="UniProtKB-UniRule"/>
</dbReference>
<dbReference type="CDD" id="cd04191">
    <property type="entry name" value="Glucan_BSP_MdoH"/>
    <property type="match status" value="1"/>
</dbReference>
<dbReference type="Gene3D" id="3.90.550.10">
    <property type="entry name" value="Spore Coat Polysaccharide Biosynthesis Protein SpsA, Chain A"/>
    <property type="match status" value="1"/>
</dbReference>
<dbReference type="HAMAP" id="MF_01072">
    <property type="entry name" value="MdoH_OpgH"/>
    <property type="match status" value="1"/>
</dbReference>
<dbReference type="InterPro" id="IPR023725">
    <property type="entry name" value="Glucans_biosynth_gluTrFase_H"/>
</dbReference>
<dbReference type="InterPro" id="IPR001173">
    <property type="entry name" value="Glyco_trans_2-like"/>
</dbReference>
<dbReference type="InterPro" id="IPR050321">
    <property type="entry name" value="Glycosyltr_2/OpgH_subfam"/>
</dbReference>
<dbReference type="InterPro" id="IPR029044">
    <property type="entry name" value="Nucleotide-diphossugar_trans"/>
</dbReference>
<dbReference type="NCBIfam" id="NF003957">
    <property type="entry name" value="PRK05454.1-4"/>
    <property type="match status" value="1"/>
</dbReference>
<dbReference type="NCBIfam" id="NF003958">
    <property type="entry name" value="PRK05454.2-1"/>
    <property type="match status" value="1"/>
</dbReference>
<dbReference type="NCBIfam" id="NF003962">
    <property type="entry name" value="PRK05454.2-5"/>
    <property type="match status" value="1"/>
</dbReference>
<dbReference type="PANTHER" id="PTHR43867">
    <property type="entry name" value="CELLULOSE SYNTHASE CATALYTIC SUBUNIT A [UDP-FORMING]"/>
    <property type="match status" value="1"/>
</dbReference>
<dbReference type="PANTHER" id="PTHR43867:SF5">
    <property type="entry name" value="GLUCANS BIOSYNTHESIS GLUCOSYLTRANSFERASE H"/>
    <property type="match status" value="1"/>
</dbReference>
<dbReference type="Pfam" id="PF13632">
    <property type="entry name" value="Glyco_trans_2_3"/>
    <property type="match status" value="1"/>
</dbReference>
<dbReference type="SUPFAM" id="SSF53448">
    <property type="entry name" value="Nucleotide-diphospho-sugar transferases"/>
    <property type="match status" value="1"/>
</dbReference>
<name>OPGH_XANE5</name>
<protein>
    <recommendedName>
        <fullName evidence="1">Glucans biosynthesis glucosyltransferase H</fullName>
        <ecNumber evidence="1">2.4.1.-</ecNumber>
    </recommendedName>
</protein>
<organism>
    <name type="scientific">Xanthomonas euvesicatoria pv. vesicatoria (strain 85-10)</name>
    <name type="common">Xanthomonas campestris pv. vesicatoria</name>
    <dbReference type="NCBI Taxonomy" id="316273"/>
    <lineage>
        <taxon>Bacteria</taxon>
        <taxon>Pseudomonadati</taxon>
        <taxon>Pseudomonadota</taxon>
        <taxon>Gammaproteobacteria</taxon>
        <taxon>Lysobacterales</taxon>
        <taxon>Lysobacteraceae</taxon>
        <taxon>Xanthomonas</taxon>
    </lineage>
</organism>
<evidence type="ECO:0000255" key="1">
    <source>
        <dbReference type="HAMAP-Rule" id="MF_01072"/>
    </source>
</evidence>
<evidence type="ECO:0000256" key="2">
    <source>
        <dbReference type="SAM" id="MobiDB-lite"/>
    </source>
</evidence>
<accession>Q3BXV7</accession>
<comment type="function">
    <text evidence="1">Involved in the biosynthesis of osmoregulated periplasmic glucans (OPGs).</text>
</comment>
<comment type="pathway">
    <text evidence="1">Glycan metabolism; osmoregulated periplasmic glucan (OPG) biosynthesis.</text>
</comment>
<comment type="subcellular location">
    <subcellularLocation>
        <location evidence="1">Cell inner membrane</location>
        <topology evidence="1">Multi-pass membrane protein</topology>
    </subcellularLocation>
</comment>
<comment type="similarity">
    <text evidence="1">Belongs to the glycosyltransferase 2 family. OpgH subfamily.</text>
</comment>